<reference key="1">
    <citation type="journal article" date="2000" name="DNA Res.">
        <title>Prediction of the coding sequences of unidentified human genes. XVI. The complete sequences of 150 new cDNA clones from brain which code for large proteins in vitro.</title>
        <authorList>
            <person name="Nagase T."/>
            <person name="Kikuno R."/>
            <person name="Ishikawa K."/>
            <person name="Hirosawa M."/>
            <person name="Ohara O."/>
        </authorList>
    </citation>
    <scope>NUCLEOTIDE SEQUENCE [LARGE SCALE MRNA] (ISOFORM 2)</scope>
    <source>
        <tissue>Brain</tissue>
    </source>
</reference>
<reference key="2">
    <citation type="submission" date="2001-06" db="EMBL/GenBank/DDBJ databases">
        <authorList>
            <person name="Howell G.R."/>
            <person name="Huckle E."/>
            <person name="Ross M.T."/>
        </authorList>
    </citation>
    <scope>NUCLEOTIDE SEQUENCE [MRNA] (ISOFORM 2)</scope>
    <source>
        <tissue>Testis</tissue>
    </source>
</reference>
<reference key="3">
    <citation type="journal article" date="2004" name="Nat. Genet.">
        <title>Complete sequencing and characterization of 21,243 full-length human cDNAs.</title>
        <authorList>
            <person name="Ota T."/>
            <person name="Suzuki Y."/>
            <person name="Nishikawa T."/>
            <person name="Otsuki T."/>
            <person name="Sugiyama T."/>
            <person name="Irie R."/>
            <person name="Wakamatsu A."/>
            <person name="Hayashi K."/>
            <person name="Sato H."/>
            <person name="Nagai K."/>
            <person name="Kimura K."/>
            <person name="Makita H."/>
            <person name="Sekine M."/>
            <person name="Obayashi M."/>
            <person name="Nishi T."/>
            <person name="Shibahara T."/>
            <person name="Tanaka T."/>
            <person name="Ishii S."/>
            <person name="Yamamoto J."/>
            <person name="Saito K."/>
            <person name="Kawai Y."/>
            <person name="Isono Y."/>
            <person name="Nakamura Y."/>
            <person name="Nagahari K."/>
            <person name="Murakami K."/>
            <person name="Yasuda T."/>
            <person name="Iwayanagi T."/>
            <person name="Wagatsuma M."/>
            <person name="Shiratori A."/>
            <person name="Sudo H."/>
            <person name="Hosoiri T."/>
            <person name="Kaku Y."/>
            <person name="Kodaira H."/>
            <person name="Kondo H."/>
            <person name="Sugawara M."/>
            <person name="Takahashi M."/>
            <person name="Kanda K."/>
            <person name="Yokoi T."/>
            <person name="Furuya T."/>
            <person name="Kikkawa E."/>
            <person name="Omura Y."/>
            <person name="Abe K."/>
            <person name="Kamihara K."/>
            <person name="Katsuta N."/>
            <person name="Sato K."/>
            <person name="Tanikawa M."/>
            <person name="Yamazaki M."/>
            <person name="Ninomiya K."/>
            <person name="Ishibashi T."/>
            <person name="Yamashita H."/>
            <person name="Murakawa K."/>
            <person name="Fujimori K."/>
            <person name="Tanai H."/>
            <person name="Kimata M."/>
            <person name="Watanabe M."/>
            <person name="Hiraoka S."/>
            <person name="Chiba Y."/>
            <person name="Ishida S."/>
            <person name="Ono Y."/>
            <person name="Takiguchi S."/>
            <person name="Watanabe S."/>
            <person name="Yosida M."/>
            <person name="Hotuta T."/>
            <person name="Kusano J."/>
            <person name="Kanehori K."/>
            <person name="Takahashi-Fujii A."/>
            <person name="Hara H."/>
            <person name="Tanase T.-O."/>
            <person name="Nomura Y."/>
            <person name="Togiya S."/>
            <person name="Komai F."/>
            <person name="Hara R."/>
            <person name="Takeuchi K."/>
            <person name="Arita M."/>
            <person name="Imose N."/>
            <person name="Musashino K."/>
            <person name="Yuuki H."/>
            <person name="Oshima A."/>
            <person name="Sasaki N."/>
            <person name="Aotsuka S."/>
            <person name="Yoshikawa Y."/>
            <person name="Matsunawa H."/>
            <person name="Ichihara T."/>
            <person name="Shiohata N."/>
            <person name="Sano S."/>
            <person name="Moriya S."/>
            <person name="Momiyama H."/>
            <person name="Satoh N."/>
            <person name="Takami S."/>
            <person name="Terashima Y."/>
            <person name="Suzuki O."/>
            <person name="Nakagawa S."/>
            <person name="Senoh A."/>
            <person name="Mizoguchi H."/>
            <person name="Goto Y."/>
            <person name="Shimizu F."/>
            <person name="Wakebe H."/>
            <person name="Hishigaki H."/>
            <person name="Watanabe T."/>
            <person name="Sugiyama A."/>
            <person name="Takemoto M."/>
            <person name="Kawakami B."/>
            <person name="Yamazaki M."/>
            <person name="Watanabe K."/>
            <person name="Kumagai A."/>
            <person name="Itakura S."/>
            <person name="Fukuzumi Y."/>
            <person name="Fujimori Y."/>
            <person name="Komiyama M."/>
            <person name="Tashiro H."/>
            <person name="Tanigami A."/>
            <person name="Fujiwara T."/>
            <person name="Ono T."/>
            <person name="Yamada K."/>
            <person name="Fujii Y."/>
            <person name="Ozaki K."/>
            <person name="Hirao M."/>
            <person name="Ohmori Y."/>
            <person name="Kawabata A."/>
            <person name="Hikiji T."/>
            <person name="Kobatake N."/>
            <person name="Inagaki H."/>
            <person name="Ikema Y."/>
            <person name="Okamoto S."/>
            <person name="Okitani R."/>
            <person name="Kawakami T."/>
            <person name="Noguchi S."/>
            <person name="Itoh T."/>
            <person name="Shigeta K."/>
            <person name="Senba T."/>
            <person name="Matsumura K."/>
            <person name="Nakajima Y."/>
            <person name="Mizuno T."/>
            <person name="Morinaga M."/>
            <person name="Sasaki M."/>
            <person name="Togashi T."/>
            <person name="Oyama M."/>
            <person name="Hata H."/>
            <person name="Watanabe M."/>
            <person name="Komatsu T."/>
            <person name="Mizushima-Sugano J."/>
            <person name="Satoh T."/>
            <person name="Shirai Y."/>
            <person name="Takahashi Y."/>
            <person name="Nakagawa K."/>
            <person name="Okumura K."/>
            <person name="Nagase T."/>
            <person name="Nomura N."/>
            <person name="Kikuchi H."/>
            <person name="Masuho Y."/>
            <person name="Yamashita R."/>
            <person name="Nakai K."/>
            <person name="Yada T."/>
            <person name="Nakamura Y."/>
            <person name="Ohara O."/>
            <person name="Isogai T."/>
            <person name="Sugano S."/>
        </authorList>
    </citation>
    <scope>NUCLEOTIDE SEQUENCE [LARGE SCALE MRNA] (ISOFORMS 1; 2; 3; 4 AND 5)</scope>
    <source>
        <tissue>Brain</tissue>
        <tissue>Testis</tissue>
        <tissue>Thalamus</tissue>
    </source>
</reference>
<reference key="4">
    <citation type="journal article" date="2005" name="Nature">
        <title>The DNA sequence of the human X chromosome.</title>
        <authorList>
            <person name="Ross M.T."/>
            <person name="Grafham D.V."/>
            <person name="Coffey A.J."/>
            <person name="Scherer S."/>
            <person name="McLay K."/>
            <person name="Muzny D."/>
            <person name="Platzer M."/>
            <person name="Howell G.R."/>
            <person name="Burrows C."/>
            <person name="Bird C.P."/>
            <person name="Frankish A."/>
            <person name="Lovell F.L."/>
            <person name="Howe K.L."/>
            <person name="Ashurst J.L."/>
            <person name="Fulton R.S."/>
            <person name="Sudbrak R."/>
            <person name="Wen G."/>
            <person name="Jones M.C."/>
            <person name="Hurles M.E."/>
            <person name="Andrews T.D."/>
            <person name="Scott C.E."/>
            <person name="Searle S."/>
            <person name="Ramser J."/>
            <person name="Whittaker A."/>
            <person name="Deadman R."/>
            <person name="Carter N.P."/>
            <person name="Hunt S.E."/>
            <person name="Chen R."/>
            <person name="Cree A."/>
            <person name="Gunaratne P."/>
            <person name="Havlak P."/>
            <person name="Hodgson A."/>
            <person name="Metzker M.L."/>
            <person name="Richards S."/>
            <person name="Scott G."/>
            <person name="Steffen D."/>
            <person name="Sodergren E."/>
            <person name="Wheeler D.A."/>
            <person name="Worley K.C."/>
            <person name="Ainscough R."/>
            <person name="Ambrose K.D."/>
            <person name="Ansari-Lari M.A."/>
            <person name="Aradhya S."/>
            <person name="Ashwell R.I."/>
            <person name="Babbage A.K."/>
            <person name="Bagguley C.L."/>
            <person name="Ballabio A."/>
            <person name="Banerjee R."/>
            <person name="Barker G.E."/>
            <person name="Barlow K.F."/>
            <person name="Barrett I.P."/>
            <person name="Bates K.N."/>
            <person name="Beare D.M."/>
            <person name="Beasley H."/>
            <person name="Beasley O."/>
            <person name="Beck A."/>
            <person name="Bethel G."/>
            <person name="Blechschmidt K."/>
            <person name="Brady N."/>
            <person name="Bray-Allen S."/>
            <person name="Bridgeman A.M."/>
            <person name="Brown A.J."/>
            <person name="Brown M.J."/>
            <person name="Bonnin D."/>
            <person name="Bruford E.A."/>
            <person name="Buhay C."/>
            <person name="Burch P."/>
            <person name="Burford D."/>
            <person name="Burgess J."/>
            <person name="Burrill W."/>
            <person name="Burton J."/>
            <person name="Bye J.M."/>
            <person name="Carder C."/>
            <person name="Carrel L."/>
            <person name="Chako J."/>
            <person name="Chapman J.C."/>
            <person name="Chavez D."/>
            <person name="Chen E."/>
            <person name="Chen G."/>
            <person name="Chen Y."/>
            <person name="Chen Z."/>
            <person name="Chinault C."/>
            <person name="Ciccodicola A."/>
            <person name="Clark S.Y."/>
            <person name="Clarke G."/>
            <person name="Clee C.M."/>
            <person name="Clegg S."/>
            <person name="Clerc-Blankenburg K."/>
            <person name="Clifford K."/>
            <person name="Cobley V."/>
            <person name="Cole C.G."/>
            <person name="Conquer J.S."/>
            <person name="Corby N."/>
            <person name="Connor R.E."/>
            <person name="David R."/>
            <person name="Davies J."/>
            <person name="Davis C."/>
            <person name="Davis J."/>
            <person name="Delgado O."/>
            <person name="Deshazo D."/>
            <person name="Dhami P."/>
            <person name="Ding Y."/>
            <person name="Dinh H."/>
            <person name="Dodsworth S."/>
            <person name="Draper H."/>
            <person name="Dugan-Rocha S."/>
            <person name="Dunham A."/>
            <person name="Dunn M."/>
            <person name="Durbin K.J."/>
            <person name="Dutta I."/>
            <person name="Eades T."/>
            <person name="Ellwood M."/>
            <person name="Emery-Cohen A."/>
            <person name="Errington H."/>
            <person name="Evans K.L."/>
            <person name="Faulkner L."/>
            <person name="Francis F."/>
            <person name="Frankland J."/>
            <person name="Fraser A.E."/>
            <person name="Galgoczy P."/>
            <person name="Gilbert J."/>
            <person name="Gill R."/>
            <person name="Gloeckner G."/>
            <person name="Gregory S.G."/>
            <person name="Gribble S."/>
            <person name="Griffiths C."/>
            <person name="Grocock R."/>
            <person name="Gu Y."/>
            <person name="Gwilliam R."/>
            <person name="Hamilton C."/>
            <person name="Hart E.A."/>
            <person name="Hawes A."/>
            <person name="Heath P.D."/>
            <person name="Heitmann K."/>
            <person name="Hennig S."/>
            <person name="Hernandez J."/>
            <person name="Hinzmann B."/>
            <person name="Ho S."/>
            <person name="Hoffs M."/>
            <person name="Howden P.J."/>
            <person name="Huckle E.J."/>
            <person name="Hume J."/>
            <person name="Hunt P.J."/>
            <person name="Hunt A.R."/>
            <person name="Isherwood J."/>
            <person name="Jacob L."/>
            <person name="Johnson D."/>
            <person name="Jones S."/>
            <person name="de Jong P.J."/>
            <person name="Joseph S.S."/>
            <person name="Keenan S."/>
            <person name="Kelly S."/>
            <person name="Kershaw J.K."/>
            <person name="Khan Z."/>
            <person name="Kioschis P."/>
            <person name="Klages S."/>
            <person name="Knights A.J."/>
            <person name="Kosiura A."/>
            <person name="Kovar-Smith C."/>
            <person name="Laird G.K."/>
            <person name="Langford C."/>
            <person name="Lawlor S."/>
            <person name="Leversha M."/>
            <person name="Lewis L."/>
            <person name="Liu W."/>
            <person name="Lloyd C."/>
            <person name="Lloyd D.M."/>
            <person name="Loulseged H."/>
            <person name="Loveland J.E."/>
            <person name="Lovell J.D."/>
            <person name="Lozado R."/>
            <person name="Lu J."/>
            <person name="Lyne R."/>
            <person name="Ma J."/>
            <person name="Maheshwari M."/>
            <person name="Matthews L.H."/>
            <person name="McDowall J."/>
            <person name="McLaren S."/>
            <person name="McMurray A."/>
            <person name="Meidl P."/>
            <person name="Meitinger T."/>
            <person name="Milne S."/>
            <person name="Miner G."/>
            <person name="Mistry S.L."/>
            <person name="Morgan M."/>
            <person name="Morris S."/>
            <person name="Mueller I."/>
            <person name="Mullikin J.C."/>
            <person name="Nguyen N."/>
            <person name="Nordsiek G."/>
            <person name="Nyakatura G."/>
            <person name="O'dell C.N."/>
            <person name="Okwuonu G."/>
            <person name="Palmer S."/>
            <person name="Pandian R."/>
            <person name="Parker D."/>
            <person name="Parrish J."/>
            <person name="Pasternak S."/>
            <person name="Patel D."/>
            <person name="Pearce A.V."/>
            <person name="Pearson D.M."/>
            <person name="Pelan S.E."/>
            <person name="Perez L."/>
            <person name="Porter K.M."/>
            <person name="Ramsey Y."/>
            <person name="Reichwald K."/>
            <person name="Rhodes S."/>
            <person name="Ridler K.A."/>
            <person name="Schlessinger D."/>
            <person name="Schueler M.G."/>
            <person name="Sehra H.K."/>
            <person name="Shaw-Smith C."/>
            <person name="Shen H."/>
            <person name="Sheridan E.M."/>
            <person name="Shownkeen R."/>
            <person name="Skuce C.D."/>
            <person name="Smith M.L."/>
            <person name="Sotheran E.C."/>
            <person name="Steingruber H.E."/>
            <person name="Steward C.A."/>
            <person name="Storey R."/>
            <person name="Swann R.M."/>
            <person name="Swarbreck D."/>
            <person name="Tabor P.E."/>
            <person name="Taudien S."/>
            <person name="Taylor T."/>
            <person name="Teague B."/>
            <person name="Thomas K."/>
            <person name="Thorpe A."/>
            <person name="Timms K."/>
            <person name="Tracey A."/>
            <person name="Trevanion S."/>
            <person name="Tromans A.C."/>
            <person name="d'Urso M."/>
            <person name="Verduzco D."/>
            <person name="Villasana D."/>
            <person name="Waldron L."/>
            <person name="Wall M."/>
            <person name="Wang Q."/>
            <person name="Warren J."/>
            <person name="Warry G.L."/>
            <person name="Wei X."/>
            <person name="West A."/>
            <person name="Whitehead S.L."/>
            <person name="Whiteley M.N."/>
            <person name="Wilkinson J.E."/>
            <person name="Willey D.L."/>
            <person name="Williams G."/>
            <person name="Williams L."/>
            <person name="Williamson A."/>
            <person name="Williamson H."/>
            <person name="Wilming L."/>
            <person name="Woodmansey R.L."/>
            <person name="Wray P.W."/>
            <person name="Yen J."/>
            <person name="Zhang J."/>
            <person name="Zhou J."/>
            <person name="Zoghbi H."/>
            <person name="Zorilla S."/>
            <person name="Buck D."/>
            <person name="Reinhardt R."/>
            <person name="Poustka A."/>
            <person name="Rosenthal A."/>
            <person name="Lehrach H."/>
            <person name="Meindl A."/>
            <person name="Minx P.J."/>
            <person name="Hillier L.W."/>
            <person name="Willard H.F."/>
            <person name="Wilson R.K."/>
            <person name="Waterston R.H."/>
            <person name="Rice C.M."/>
            <person name="Vaudin M."/>
            <person name="Coulson A."/>
            <person name="Nelson D.L."/>
            <person name="Weinstock G."/>
            <person name="Sulston J.E."/>
            <person name="Durbin R.M."/>
            <person name="Hubbard T."/>
            <person name="Gibbs R.A."/>
            <person name="Beck S."/>
            <person name="Rogers J."/>
            <person name="Bentley D.R."/>
        </authorList>
    </citation>
    <scope>NUCLEOTIDE SEQUENCE [LARGE SCALE GENOMIC DNA]</scope>
</reference>
<reference key="5">
    <citation type="submission" date="2005-09" db="EMBL/GenBank/DDBJ databases">
        <authorList>
            <person name="Mural R.J."/>
            <person name="Istrail S."/>
            <person name="Sutton G.G."/>
            <person name="Florea L."/>
            <person name="Halpern A.L."/>
            <person name="Mobarry C.M."/>
            <person name="Lippert R."/>
            <person name="Walenz B."/>
            <person name="Shatkay H."/>
            <person name="Dew I."/>
            <person name="Miller J.R."/>
            <person name="Flanigan M.J."/>
            <person name="Edwards N.J."/>
            <person name="Bolanos R."/>
            <person name="Fasulo D."/>
            <person name="Halldorsson B.V."/>
            <person name="Hannenhalli S."/>
            <person name="Turner R."/>
            <person name="Yooseph S."/>
            <person name="Lu F."/>
            <person name="Nusskern D.R."/>
            <person name="Shue B.C."/>
            <person name="Zheng X.H."/>
            <person name="Zhong F."/>
            <person name="Delcher A.L."/>
            <person name="Huson D.H."/>
            <person name="Kravitz S.A."/>
            <person name="Mouchard L."/>
            <person name="Reinert K."/>
            <person name="Remington K.A."/>
            <person name="Clark A.G."/>
            <person name="Waterman M.S."/>
            <person name="Eichler E.E."/>
            <person name="Adams M.D."/>
            <person name="Hunkapiller M.W."/>
            <person name="Myers E.W."/>
            <person name="Venter J.C."/>
        </authorList>
    </citation>
    <scope>NUCLEOTIDE SEQUENCE [LARGE SCALE GENOMIC DNA]</scope>
</reference>
<reference key="6">
    <citation type="journal article" date="2004" name="Genome Res.">
        <title>The status, quality, and expansion of the NIH full-length cDNA project: the Mammalian Gene Collection (MGC).</title>
        <authorList>
            <consortium name="The MGC Project Team"/>
        </authorList>
    </citation>
    <scope>NUCLEOTIDE SEQUENCE [LARGE SCALE MRNA] (ISOFORM 1)</scope>
    <source>
        <tissue>Brain</tissue>
    </source>
</reference>
<reference key="7">
    <citation type="journal article" date="2003" name="Nat. Cell Biol.">
        <title>Targeting of protein ubiquitination by BTB-Cullin 3-Roc1 ubiquitin ligases.</title>
        <authorList>
            <person name="Furukawa M."/>
            <person name="He Y.J."/>
            <person name="Borchers C."/>
            <person name="Xiong Y."/>
        </authorList>
    </citation>
    <scope>FUNCTION AS AN E3 UBIQUITIN-PROTEIN LIGASE</scope>
    <scope>INTERACTION WITH CUL3</scope>
</reference>
<reference key="8">
    <citation type="journal article" date="2007" name="Dev. Cell">
        <title>A Cul3-based E3 ligase removes Aurora B from mitotic chromosomes, regulating mitotic progression and completion of cytokinesis in human cells.</title>
        <authorList>
            <person name="Sumara I."/>
            <person name="Quadroni M."/>
            <person name="Frei C."/>
            <person name="Olma M.H."/>
            <person name="Sumara G."/>
            <person name="Ricci R."/>
            <person name="Peter M."/>
        </authorList>
    </citation>
    <scope>FUNCTION</scope>
    <scope>INTERACTION WITH AURKB; CUL3 AND KLHL9</scope>
</reference>
<reference key="9">
    <citation type="journal article" date="2009" name="J. Cell Biol.">
        <title>The Cul3-KLHL21 E3 ubiquitin ligase targets aurora B to midzone microtubules in anaphase and is required for cytokinesis.</title>
        <authorList>
            <person name="Maerki S."/>
            <person name="Olma M.H."/>
            <person name="Staubli T."/>
            <person name="Steigemann P."/>
            <person name="Gerlich D.W."/>
            <person name="Quadroni M."/>
            <person name="Sumara I."/>
            <person name="Peter M."/>
        </authorList>
    </citation>
    <scope>FUNCTION</scope>
</reference>
<reference key="10">
    <citation type="journal article" date="2011" name="Nature">
        <title>Exome sequencing identifies frequent mutation of the SWI/SNF complex gene PBRM1 in renal carcinoma.</title>
        <authorList>
            <person name="Varela I."/>
            <person name="Tarpey P."/>
            <person name="Raine K."/>
            <person name="Huang D."/>
            <person name="Ong C.K."/>
            <person name="Stephens P."/>
            <person name="Davies H."/>
            <person name="Jones D."/>
            <person name="Lin M.L."/>
            <person name="Teague J."/>
            <person name="Bignell G."/>
            <person name="Butler A."/>
            <person name="Cho J."/>
            <person name="Dalgliesh G.L."/>
            <person name="Galappaththige D."/>
            <person name="Greenman C."/>
            <person name="Hardy C."/>
            <person name="Jia M."/>
            <person name="Latimer C."/>
            <person name="Lau K.W."/>
            <person name="Marshall J."/>
            <person name="McLaren S."/>
            <person name="Menzies A."/>
            <person name="Mudie L."/>
            <person name="Stebbings L."/>
            <person name="Largaespada D.A."/>
            <person name="Wessels L.F.A."/>
            <person name="Richard S."/>
            <person name="Kahnoski R.J."/>
            <person name="Anema J."/>
            <person name="Tuveson D.A."/>
            <person name="Perez-Mancera P.A."/>
            <person name="Mustonen V."/>
            <person name="Fischer A."/>
            <person name="Adams D.J."/>
            <person name="Rust A."/>
            <person name="Chan-On W."/>
            <person name="Subimerb C."/>
            <person name="Dykema K."/>
            <person name="Furge K."/>
            <person name="Campbell P.J."/>
            <person name="Teh B.T."/>
            <person name="Stratton M.R."/>
            <person name="Futreal P.A."/>
        </authorList>
    </citation>
    <scope>VARIANT ILE-223</scope>
</reference>
<reference key="11">
    <citation type="journal article" date="2012" name="N. Engl. J. Med.">
        <title>Diagnostic exome sequencing in persons with severe intellectual disability.</title>
        <authorList>
            <person name="de Ligt J."/>
            <person name="Willemsen M.H."/>
            <person name="van Bon B.W."/>
            <person name="Kleefstra T."/>
            <person name="Yntema H.G."/>
            <person name="Kroes T."/>
            <person name="Vulto-van Silfhout A.T."/>
            <person name="Koolen D.A."/>
            <person name="de Vries P."/>
            <person name="Gilissen C."/>
            <person name="del Rosario M."/>
            <person name="Hoischen A."/>
            <person name="Scheffer H."/>
            <person name="de Vries B.B."/>
            <person name="Brunner H.G."/>
            <person name="Veltman J.A."/>
            <person name="Vissers L.E."/>
        </authorList>
    </citation>
    <scope>VARIANT SER-261</scope>
</reference>
<dbReference type="EMBL" id="AB037730">
    <property type="protein sequence ID" value="BAA92547.1"/>
    <property type="status" value="ALT_INIT"/>
    <property type="molecule type" value="mRNA"/>
</dbReference>
<dbReference type="EMBL" id="AL591986">
    <property type="protein sequence ID" value="CAC41335.1"/>
    <property type="status" value="ALT_INIT"/>
    <property type="molecule type" value="mRNA"/>
</dbReference>
<dbReference type="EMBL" id="AK122724">
    <property type="protein sequence ID" value="BAG53690.1"/>
    <property type="molecule type" value="mRNA"/>
</dbReference>
<dbReference type="EMBL" id="AK125356">
    <property type="protein sequence ID" value="BAG54189.1"/>
    <property type="molecule type" value="mRNA"/>
</dbReference>
<dbReference type="EMBL" id="AK296324">
    <property type="protein sequence ID" value="BAH12315.1"/>
    <property type="molecule type" value="mRNA"/>
</dbReference>
<dbReference type="EMBL" id="AK299257">
    <property type="protein sequence ID" value="BAH12978.1"/>
    <property type="molecule type" value="mRNA"/>
</dbReference>
<dbReference type="EMBL" id="AK302713">
    <property type="protein sequence ID" value="BAH13788.1"/>
    <property type="molecule type" value="mRNA"/>
</dbReference>
<dbReference type="EMBL" id="AC006968">
    <property type="status" value="NOT_ANNOTATED_CDS"/>
    <property type="molecule type" value="Genomic_DNA"/>
</dbReference>
<dbReference type="EMBL" id="AC006963">
    <property type="protein sequence ID" value="AAF03529.1"/>
    <property type="molecule type" value="Genomic_DNA"/>
</dbReference>
<dbReference type="EMBL" id="CH471161">
    <property type="protein sequence ID" value="EAW89898.1"/>
    <property type="molecule type" value="Genomic_DNA"/>
</dbReference>
<dbReference type="EMBL" id="CH471161">
    <property type="protein sequence ID" value="EAW89900.1"/>
    <property type="molecule type" value="Genomic_DNA"/>
</dbReference>
<dbReference type="EMBL" id="BC064576">
    <property type="protein sequence ID" value="AAH64576.2"/>
    <property type="molecule type" value="mRNA"/>
</dbReference>
<dbReference type="CCDS" id="CCDS14571.1">
    <molecule id="Q9P2N7-1"/>
</dbReference>
<dbReference type="CCDS" id="CCDS55480.1">
    <molecule id="Q9P2N7-5"/>
</dbReference>
<dbReference type="CCDS" id="CCDS55481.1">
    <molecule id="Q9P2N7-3"/>
</dbReference>
<dbReference type="CCDS" id="CCDS94657.1">
    <molecule id="Q9P2N7-4"/>
</dbReference>
<dbReference type="RefSeq" id="NP_001161771.1">
    <molecule id="Q9P2N7-5"/>
    <property type="nucleotide sequence ID" value="NM_001168299.2"/>
</dbReference>
<dbReference type="RefSeq" id="NP_001161772.1">
    <molecule id="Q9P2N7-4"/>
    <property type="nucleotide sequence ID" value="NM_001168300.2"/>
</dbReference>
<dbReference type="RefSeq" id="NP_001161773.1">
    <molecule id="Q9P2N7-3"/>
    <property type="nucleotide sequence ID" value="NM_001168301.2"/>
</dbReference>
<dbReference type="RefSeq" id="NP_001161774.1">
    <molecule id="Q9P2N7-3"/>
    <property type="nucleotide sequence ID" value="NM_001168302.2"/>
</dbReference>
<dbReference type="RefSeq" id="NP_001161775.1">
    <property type="nucleotide sequence ID" value="NM_001168303.1"/>
</dbReference>
<dbReference type="RefSeq" id="NP_001381792.1">
    <molecule id="Q9P2N7-1"/>
    <property type="nucleotide sequence ID" value="NM_001394863.1"/>
</dbReference>
<dbReference type="RefSeq" id="NP_277030.2">
    <molecule id="Q9P2N7-1"/>
    <property type="nucleotide sequence ID" value="NM_033495.3"/>
</dbReference>
<dbReference type="RefSeq" id="XP_011529713.1">
    <property type="nucleotide sequence ID" value="XM_011531411.1"/>
</dbReference>
<dbReference type="RefSeq" id="XP_016885439.1">
    <property type="nucleotide sequence ID" value="XM_017029950.1"/>
</dbReference>
<dbReference type="SMR" id="Q9P2N7"/>
<dbReference type="BioGRID" id="124688">
    <property type="interactions" value="133"/>
</dbReference>
<dbReference type="ComplexPortal" id="CPX-8090">
    <property type="entry name" value="CRL3 E3 ubiquitin ligase complex, KLHL13 variant"/>
</dbReference>
<dbReference type="CORUM" id="Q9P2N7"/>
<dbReference type="FunCoup" id="Q9P2N7">
    <property type="interactions" value="668"/>
</dbReference>
<dbReference type="IntAct" id="Q9P2N7">
    <property type="interactions" value="81"/>
</dbReference>
<dbReference type="MINT" id="Q9P2N7"/>
<dbReference type="STRING" id="9606.ENSP00000419803"/>
<dbReference type="iPTMnet" id="Q9P2N7"/>
<dbReference type="PhosphoSitePlus" id="Q9P2N7"/>
<dbReference type="BioMuta" id="KLHL13"/>
<dbReference type="DMDM" id="239938883"/>
<dbReference type="jPOST" id="Q9P2N7"/>
<dbReference type="MassIVE" id="Q9P2N7"/>
<dbReference type="PaxDb" id="9606-ENSP00000443191"/>
<dbReference type="PeptideAtlas" id="Q9P2N7"/>
<dbReference type="ProteomicsDB" id="83867">
    <molecule id="Q9P2N7-1"/>
</dbReference>
<dbReference type="ProteomicsDB" id="83868">
    <molecule id="Q9P2N7-2"/>
</dbReference>
<dbReference type="ProteomicsDB" id="83869">
    <molecule id="Q9P2N7-3"/>
</dbReference>
<dbReference type="ProteomicsDB" id="83870">
    <molecule id="Q9P2N7-4"/>
</dbReference>
<dbReference type="ProteomicsDB" id="83871">
    <molecule id="Q9P2N7-5"/>
</dbReference>
<dbReference type="Pumba" id="Q9P2N7"/>
<dbReference type="Antibodypedia" id="29658">
    <property type="antibodies" value="138 antibodies from 24 providers"/>
</dbReference>
<dbReference type="DNASU" id="90293"/>
<dbReference type="Ensembl" id="ENST00000262820.7">
    <molecule id="Q9P2N7-1"/>
    <property type="protein sequence ID" value="ENSP00000262820.3"/>
    <property type="gene ID" value="ENSG00000003096.15"/>
</dbReference>
<dbReference type="Ensembl" id="ENST00000371878.5">
    <molecule id="Q9P2N7-4"/>
    <property type="protein sequence ID" value="ENSP00000360945.2"/>
    <property type="gene ID" value="ENSG00000003096.15"/>
</dbReference>
<dbReference type="Ensembl" id="ENST00000371882.5">
    <molecule id="Q9P2N7-2"/>
    <property type="protein sequence ID" value="ENSP00000360949.2"/>
    <property type="gene ID" value="ENSG00000003096.15"/>
</dbReference>
<dbReference type="Ensembl" id="ENST00000469946.5">
    <molecule id="Q9P2N7-5"/>
    <property type="protein sequence ID" value="ENSP00000419803.2"/>
    <property type="gene ID" value="ENSG00000003096.15"/>
</dbReference>
<dbReference type="Ensembl" id="ENST00000540167.6">
    <molecule id="Q9P2N7-3"/>
    <property type="protein sequence ID" value="ENSP00000441029.1"/>
    <property type="gene ID" value="ENSG00000003096.15"/>
</dbReference>
<dbReference type="Ensembl" id="ENST00000541812.5">
    <molecule id="Q9P2N7-3"/>
    <property type="protein sequence ID" value="ENSP00000444450.1"/>
    <property type="gene ID" value="ENSG00000003096.15"/>
</dbReference>
<dbReference type="GeneID" id="90293"/>
<dbReference type="KEGG" id="hsa:90293"/>
<dbReference type="MANE-Select" id="ENST00000540167.6">
    <molecule id="Q9P2N7-3"/>
    <property type="protein sequence ID" value="ENSP00000441029.1"/>
    <property type="RefSeq nucleotide sequence ID" value="NM_001168302.2"/>
    <property type="RefSeq protein sequence ID" value="NP_001161774.1"/>
</dbReference>
<dbReference type="UCSC" id="uc004eqk.4">
    <molecule id="Q9P2N7-1"/>
    <property type="organism name" value="human"/>
</dbReference>
<dbReference type="AGR" id="HGNC:22931"/>
<dbReference type="CTD" id="90293"/>
<dbReference type="DisGeNET" id="90293"/>
<dbReference type="GeneCards" id="KLHL13"/>
<dbReference type="HGNC" id="HGNC:22931">
    <property type="gene designation" value="KLHL13"/>
</dbReference>
<dbReference type="HPA" id="ENSG00000003096">
    <property type="expression patterns" value="Tissue enhanced (endometrium)"/>
</dbReference>
<dbReference type="MalaCards" id="KLHL13"/>
<dbReference type="MIM" id="300655">
    <property type="type" value="gene"/>
</dbReference>
<dbReference type="neXtProt" id="NX_Q9P2N7"/>
<dbReference type="OpenTargets" id="ENSG00000003096"/>
<dbReference type="PharmGKB" id="PA134959204"/>
<dbReference type="VEuPathDB" id="HostDB:ENSG00000003096"/>
<dbReference type="eggNOG" id="KOG4441">
    <property type="taxonomic scope" value="Eukaryota"/>
</dbReference>
<dbReference type="GeneTree" id="ENSGT00940000154359"/>
<dbReference type="InParanoid" id="Q9P2N7"/>
<dbReference type="OMA" id="XGITHDT"/>
<dbReference type="OrthoDB" id="1925334at2759"/>
<dbReference type="PAN-GO" id="Q9P2N7">
    <property type="GO annotations" value="5 GO annotations based on evolutionary models"/>
</dbReference>
<dbReference type="PhylomeDB" id="Q9P2N7"/>
<dbReference type="TreeFam" id="TF328485"/>
<dbReference type="PathwayCommons" id="Q9P2N7"/>
<dbReference type="Reactome" id="R-HSA-8951664">
    <property type="pathway name" value="Neddylation"/>
</dbReference>
<dbReference type="Reactome" id="R-HSA-983168">
    <property type="pathway name" value="Antigen processing: Ubiquitination &amp; Proteasome degradation"/>
</dbReference>
<dbReference type="SignaLink" id="Q9P2N7"/>
<dbReference type="SIGNOR" id="Q9P2N7"/>
<dbReference type="UniPathway" id="UPA00143"/>
<dbReference type="BioGRID-ORCS" id="90293">
    <property type="hits" value="8 hits in 793 CRISPR screens"/>
</dbReference>
<dbReference type="ChiTaRS" id="KLHL13">
    <property type="organism name" value="human"/>
</dbReference>
<dbReference type="GenomeRNAi" id="90293"/>
<dbReference type="Pharos" id="Q9P2N7">
    <property type="development level" value="Tdark"/>
</dbReference>
<dbReference type="PRO" id="PR:Q9P2N7"/>
<dbReference type="Proteomes" id="UP000005640">
    <property type="component" value="Chromosome X"/>
</dbReference>
<dbReference type="RNAct" id="Q9P2N7">
    <property type="molecule type" value="protein"/>
</dbReference>
<dbReference type="Bgee" id="ENSG00000003096">
    <property type="expression patterns" value="Expressed in smooth muscle tissue and 166 other cell types or tissues"/>
</dbReference>
<dbReference type="ExpressionAtlas" id="Q9P2N7">
    <property type="expression patterns" value="baseline and differential"/>
</dbReference>
<dbReference type="GO" id="GO:0031463">
    <property type="term" value="C:Cul3-RING ubiquitin ligase complex"/>
    <property type="evidence" value="ECO:0000314"/>
    <property type="project" value="UniProtKB"/>
</dbReference>
<dbReference type="GO" id="GO:0005829">
    <property type="term" value="C:cytosol"/>
    <property type="evidence" value="ECO:0000304"/>
    <property type="project" value="Reactome"/>
</dbReference>
<dbReference type="GO" id="GO:0097602">
    <property type="term" value="F:cullin family protein binding"/>
    <property type="evidence" value="ECO:0000318"/>
    <property type="project" value="GO_Central"/>
</dbReference>
<dbReference type="GO" id="GO:0051301">
    <property type="term" value="P:cell division"/>
    <property type="evidence" value="ECO:0007669"/>
    <property type="project" value="UniProtKB-KW"/>
</dbReference>
<dbReference type="GO" id="GO:0016567">
    <property type="term" value="P:protein ubiquitination"/>
    <property type="evidence" value="ECO:0000314"/>
    <property type="project" value="UniProtKB"/>
</dbReference>
<dbReference type="GO" id="GO:0032465">
    <property type="term" value="P:regulation of cytokinesis"/>
    <property type="evidence" value="ECO:0000315"/>
    <property type="project" value="UniProtKB"/>
</dbReference>
<dbReference type="CDD" id="cd18449">
    <property type="entry name" value="BACK_KLHL9_13"/>
    <property type="match status" value="1"/>
</dbReference>
<dbReference type="CDD" id="cd18239">
    <property type="entry name" value="BTB_POZ_KLHL9_13"/>
    <property type="match status" value="1"/>
</dbReference>
<dbReference type="FunFam" id="1.25.40.420:FF:000002">
    <property type="entry name" value="Kelch-like family member 13"/>
    <property type="match status" value="1"/>
</dbReference>
<dbReference type="FunFam" id="2.120.10.80:FF:000001">
    <property type="entry name" value="Kelch-like family member 13"/>
    <property type="match status" value="1"/>
</dbReference>
<dbReference type="FunFam" id="3.30.710.10:FF:000011">
    <property type="entry name" value="Kelch-like family member 13"/>
    <property type="match status" value="1"/>
</dbReference>
<dbReference type="Gene3D" id="1.25.40.420">
    <property type="match status" value="1"/>
</dbReference>
<dbReference type="Gene3D" id="2.120.10.80">
    <property type="entry name" value="Kelch-type beta propeller"/>
    <property type="match status" value="1"/>
</dbReference>
<dbReference type="Gene3D" id="3.30.710.10">
    <property type="entry name" value="Potassium Channel Kv1.1, Chain A"/>
    <property type="match status" value="1"/>
</dbReference>
<dbReference type="InterPro" id="IPR011705">
    <property type="entry name" value="BACK"/>
</dbReference>
<dbReference type="InterPro" id="IPR017096">
    <property type="entry name" value="BTB-kelch_protein"/>
</dbReference>
<dbReference type="InterPro" id="IPR000210">
    <property type="entry name" value="BTB/POZ_dom"/>
</dbReference>
<dbReference type="InterPro" id="IPR015915">
    <property type="entry name" value="Kelch-typ_b-propeller"/>
</dbReference>
<dbReference type="InterPro" id="IPR006652">
    <property type="entry name" value="Kelch_1"/>
</dbReference>
<dbReference type="InterPro" id="IPR011333">
    <property type="entry name" value="SKP1/BTB/POZ_sf"/>
</dbReference>
<dbReference type="PANTHER" id="PTHR45632:SF7">
    <property type="entry name" value="KELCH-LIKE PROTEIN 13"/>
    <property type="match status" value="1"/>
</dbReference>
<dbReference type="PANTHER" id="PTHR45632">
    <property type="entry name" value="LD33804P"/>
    <property type="match status" value="1"/>
</dbReference>
<dbReference type="Pfam" id="PF07707">
    <property type="entry name" value="BACK"/>
    <property type="match status" value="1"/>
</dbReference>
<dbReference type="Pfam" id="PF00651">
    <property type="entry name" value="BTB"/>
    <property type="match status" value="1"/>
</dbReference>
<dbReference type="Pfam" id="PF01344">
    <property type="entry name" value="Kelch_1"/>
    <property type="match status" value="1"/>
</dbReference>
<dbReference type="Pfam" id="PF24681">
    <property type="entry name" value="Kelch_KLHDC2_KLHL20_DRC7"/>
    <property type="match status" value="1"/>
</dbReference>
<dbReference type="PIRSF" id="PIRSF037037">
    <property type="entry name" value="Kelch-like_protein_gigaxonin"/>
    <property type="match status" value="1"/>
</dbReference>
<dbReference type="SMART" id="SM00875">
    <property type="entry name" value="BACK"/>
    <property type="match status" value="1"/>
</dbReference>
<dbReference type="SMART" id="SM00225">
    <property type="entry name" value="BTB"/>
    <property type="match status" value="1"/>
</dbReference>
<dbReference type="SMART" id="SM00612">
    <property type="entry name" value="Kelch"/>
    <property type="match status" value="6"/>
</dbReference>
<dbReference type="SUPFAM" id="SSF117281">
    <property type="entry name" value="Kelch motif"/>
    <property type="match status" value="1"/>
</dbReference>
<dbReference type="SUPFAM" id="SSF54695">
    <property type="entry name" value="POZ domain"/>
    <property type="match status" value="1"/>
</dbReference>
<dbReference type="PROSITE" id="PS50097">
    <property type="entry name" value="BTB"/>
    <property type="match status" value="1"/>
</dbReference>
<sequence length="655" mass="73868">MPLKWKTSSPAIWKFPVPVLKTSRSTPLSPAYISLVEEEDQHMKLSLGGSEMGLSSHLQSSKAGPTRIFTSNTHSSVVLQGFDQLRLEGLLCDVTLMPGDTDDAFPVHRVMMASASDYFKAMFTGGMKEQDLMCIKLHGVSKVGLRKIIDFIYTAKLSLNMDNLQDTLEAASFLQILPVLDFCKVFLISGVTLDNCVEVGRIANTYNLTEVDKYVNSFVLKNFPALLSTGEFLKLPFERLAFVLSSNSLKHCTELELFKATCRWLRLEEPRMDFAAKLMKNIRFPLMTPQELINYVQTVDFMRTDNTCVNLLLEASNYQMMPYMQPVMQSDRTAIRSDTTHLVTLGGVLRQQLVVSKELRMYDEKAHEWKSLAPMDAPRYQHGIAVIGNFLYVVGGQSNYDTKGKTAVDTVFRFDPRYNKWMQVASLNEKRTFFHLSALKGYLYAVGGRNAAGELPTVECYNPRTNEWTYVAKMSEPHYGHAGTVYGGVMYISGGITHDTFQKELMCFDPDTDKWIQKAPMTTVRGLHCMCTVGERLYVIGGNHFRGTSDYDDVLSCEYYSPILDQWTPIAAMLRGQSDVGVAVFENKIYVVGGYSWNNRCMVEIVQKYDPDKDEWHKVFDLPESLGGIRACTLTVFPPEETTPSPSRESPLSAP</sequence>
<name>KLH13_HUMAN</name>
<proteinExistence type="evidence at protein level"/>
<accession>Q9P2N7</accession>
<accession>B3KV78</accession>
<accession>B3KWM7</accession>
<accession>B7Z3S9</accession>
<accession>B7Z5P2</accession>
<accession>B7Z802</accession>
<accession>D3DWH6</accession>
<accession>Q6P2E3</accession>
<accession>Q96QI7</accession>
<accession>Q9UDN9</accession>
<gene>
    <name type="primary">KLHL13</name>
    <name type="synonym">BKLHD2</name>
    <name type="synonym">KIAA1309</name>
</gene>
<organism>
    <name type="scientific">Homo sapiens</name>
    <name type="common">Human</name>
    <dbReference type="NCBI Taxonomy" id="9606"/>
    <lineage>
        <taxon>Eukaryota</taxon>
        <taxon>Metazoa</taxon>
        <taxon>Chordata</taxon>
        <taxon>Craniata</taxon>
        <taxon>Vertebrata</taxon>
        <taxon>Euteleostomi</taxon>
        <taxon>Mammalia</taxon>
        <taxon>Eutheria</taxon>
        <taxon>Euarchontoglires</taxon>
        <taxon>Primates</taxon>
        <taxon>Haplorrhini</taxon>
        <taxon>Catarrhini</taxon>
        <taxon>Hominidae</taxon>
        <taxon>Homo</taxon>
    </lineage>
</organism>
<protein>
    <recommendedName>
        <fullName>Kelch-like protein 13</fullName>
    </recommendedName>
    <alternativeName>
        <fullName>BTB and kelch domain-containing protein 2</fullName>
    </alternativeName>
</protein>
<evidence type="ECO:0000255" key="1">
    <source>
        <dbReference type="PROSITE-ProRule" id="PRU00037"/>
    </source>
</evidence>
<evidence type="ECO:0000269" key="2">
    <source>
    </source>
</evidence>
<evidence type="ECO:0000269" key="3">
    <source>
    </source>
</evidence>
<evidence type="ECO:0000269" key="4">
    <source>
    </source>
</evidence>
<evidence type="ECO:0000269" key="5">
    <source>
    </source>
</evidence>
<evidence type="ECO:0000269" key="6">
    <source>
    </source>
</evidence>
<evidence type="ECO:0000303" key="7">
    <source>
    </source>
</evidence>
<evidence type="ECO:0000303" key="8">
    <source>
    </source>
</evidence>
<evidence type="ECO:0000303" key="9">
    <source ref="2"/>
</evidence>
<evidence type="ECO:0000305" key="10"/>
<feature type="chain" id="PRO_0000119115" description="Kelch-like protein 13">
    <location>
        <begin position="1"/>
        <end position="655"/>
    </location>
</feature>
<feature type="domain" description="BTB" evidence="1">
    <location>
        <begin position="92"/>
        <end position="161"/>
    </location>
</feature>
<feature type="domain" description="BACK">
    <location>
        <begin position="196"/>
        <end position="297"/>
    </location>
</feature>
<feature type="repeat" description="Kelch 1">
    <location>
        <begin position="341"/>
        <end position="389"/>
    </location>
</feature>
<feature type="repeat" description="Kelch 2">
    <location>
        <begin position="390"/>
        <end position="441"/>
    </location>
</feature>
<feature type="repeat" description="Kelch 3">
    <location>
        <begin position="442"/>
        <end position="488"/>
    </location>
</feature>
<feature type="repeat" description="Kelch 4">
    <location>
        <begin position="490"/>
        <end position="535"/>
    </location>
</feature>
<feature type="repeat" description="Kelch 5">
    <location>
        <begin position="537"/>
        <end position="587"/>
    </location>
</feature>
<feature type="repeat" description="Kelch 6">
    <location>
        <begin position="588"/>
        <end position="636"/>
    </location>
</feature>
<feature type="splice variant" id="VSP_037530" description="In isoform 2." evidence="7 8 9">
    <location>
        <begin position="1"/>
        <end position="42"/>
    </location>
</feature>
<feature type="splice variant" id="VSP_037531" description="In isoform 3." evidence="8">
    <original>MPLKWKTSSPAIWKFPVPVLKTSRSTPLSPAYI</original>
    <variation>MDHLHRGELVAAILRNR</variation>
    <location>
        <begin position="1"/>
        <end position="33"/>
    </location>
</feature>
<feature type="splice variant" id="VSP_037532" description="In isoform 4." evidence="8">
    <original>MPLKWKTSSPAIWKFPVPVLKTSRSTPLSPAYI</original>
    <variation>MLRFISHLYCCSSKEDCSEDDKCILSR</variation>
    <location>
        <begin position="1"/>
        <end position="33"/>
    </location>
</feature>
<feature type="splice variant" id="VSP_037533" description="In isoform 5." evidence="8">
    <original>MPLKWKTSSPAIWKFPVPVLKTSRSTPLSPAYI</original>
    <variation>MMRVQTLREKWAYWRRRQLSLKQADFKDIFKKSTSG</variation>
    <location>
        <begin position="1"/>
        <end position="33"/>
    </location>
</feature>
<feature type="sequence variant" id="VAR_064725" description="Found in a renal cell carcinoma sample; somatic mutation." evidence="5">
    <original>F</original>
    <variation>I</variation>
    <location>
        <position position="223"/>
    </location>
</feature>
<feature type="sequence variant" id="VAR_069423" description="In dbSNP:rs141912385." evidence="6">
    <original>T</original>
    <variation>S</variation>
    <location>
        <position position="261"/>
    </location>
</feature>
<feature type="sequence conflict" description="In Ref. 3; BAG54189." evidence="10" ref="3">
    <original>K</original>
    <variation>R</variation>
    <location>
        <position position="14"/>
    </location>
</feature>
<feature type="sequence conflict" description="In Ref. 3; BAG54189." evidence="10" ref="3">
    <original>L</original>
    <variation>P</variation>
    <location>
        <position position="20"/>
    </location>
</feature>
<feature type="sequence conflict" description="In Ref. 3; BAG54189." evidence="10" ref="3">
    <original>Q</original>
    <variation>R</variation>
    <location>
        <position position="352"/>
    </location>
</feature>
<comment type="function">
    <text evidence="2 3 4">Substrate-specific adapter of a BCR (BTB-CUL3-RBX1) E3 ubiquitin-protein ligase complex required for mitotic progression and cytokinesis. The BCR(KLHL9-KLHL13) E3 ubiquitin ligase complex mediates the ubiquitination of AURKB and controls the dynamic behavior of AURKB on mitotic chromosomes and thereby coordinates faithful mitotic progression and completion of cytokinesis.</text>
</comment>
<comment type="pathway">
    <text>Protein modification; protein ubiquitination.</text>
</comment>
<comment type="subunit">
    <text evidence="2 3">Component of the BCR(KLHL9-KLHL13) E3 ubiquitin ligase complex, at least composed of CUL3, KLHL9, KLHL13 and RBX1. Interacts with AURKB.</text>
</comment>
<comment type="interaction">
    <interactant intactId="EBI-1996321">
        <id>Q9P2N7</id>
    </interactant>
    <interactant intactId="EBI-624291">
        <id>Q96GD4</id>
        <label>AURKB</label>
    </interactant>
    <organismsDiffer>false</organismsDiffer>
    <experiments>2</experiments>
</comment>
<comment type="interaction">
    <interactant intactId="EBI-1996321">
        <id>Q9P2N7</id>
    </interactant>
    <interactant intactId="EBI-456129">
        <id>Q13618</id>
        <label>CUL3</label>
    </interactant>
    <organismsDiffer>false</organismsDiffer>
    <experiments>15</experiments>
</comment>
<comment type="alternative products">
    <event type="alternative splicing"/>
    <isoform>
        <id>Q9P2N7-1</id>
        <name>1</name>
        <sequence type="displayed"/>
    </isoform>
    <isoform>
        <id>Q9P2N7-2</id>
        <name>2</name>
        <sequence type="described" ref="VSP_037530"/>
    </isoform>
    <isoform>
        <id>Q9P2N7-3</id>
        <name>3</name>
        <sequence type="described" ref="VSP_037531"/>
    </isoform>
    <isoform>
        <id>Q9P2N7-4</id>
        <name>4</name>
        <sequence type="described" ref="VSP_037532"/>
    </isoform>
    <isoform>
        <id>Q9P2N7-5</id>
        <name>5</name>
        <sequence type="described" ref="VSP_037533"/>
    </isoform>
</comment>
<comment type="sequence caution" evidence="10">
    <conflict type="erroneous initiation">
        <sequence resource="EMBL-CDS" id="BAA92547"/>
    </conflict>
</comment>
<comment type="sequence caution" evidence="10">
    <conflict type="erroneous initiation">
        <sequence resource="EMBL-CDS" id="CAC41335"/>
    </conflict>
</comment>
<keyword id="KW-0025">Alternative splicing</keyword>
<keyword id="KW-0131">Cell cycle</keyword>
<keyword id="KW-0132">Cell division</keyword>
<keyword id="KW-0880">Kelch repeat</keyword>
<keyword id="KW-0498">Mitosis</keyword>
<keyword id="KW-1267">Proteomics identification</keyword>
<keyword id="KW-1185">Reference proteome</keyword>
<keyword id="KW-0677">Repeat</keyword>
<keyword id="KW-0833">Ubl conjugation pathway</keyword>